<name>RPB4_HUMAN</name>
<dbReference type="EMBL" id="U89387">
    <property type="protein sequence ID" value="AAC52056.1"/>
    <property type="molecule type" value="Genomic_DNA"/>
</dbReference>
<dbReference type="EMBL" id="U85510">
    <property type="protein sequence ID" value="AAC80226.1"/>
    <property type="molecule type" value="mRNA"/>
</dbReference>
<dbReference type="EMBL" id="BC017205">
    <property type="protein sequence ID" value="AAH17205.1"/>
    <property type="molecule type" value="mRNA"/>
</dbReference>
<dbReference type="EMBL" id="BC093795">
    <property type="protein sequence ID" value="AAH93795.1"/>
    <property type="molecule type" value="mRNA"/>
</dbReference>
<dbReference type="EMBL" id="BC093797">
    <property type="protein sequence ID" value="AAH93797.1"/>
    <property type="molecule type" value="mRNA"/>
</dbReference>
<dbReference type="CCDS" id="CCDS2151.1"/>
<dbReference type="RefSeq" id="NP_004796.1">
    <property type="nucleotide sequence ID" value="NM_004805.4"/>
</dbReference>
<dbReference type="PDB" id="2C35">
    <property type="method" value="X-ray"/>
    <property type="resolution" value="2.70 A"/>
    <property type="chains" value="A/C/E/G=1-142"/>
</dbReference>
<dbReference type="PDB" id="5IY6">
    <property type="method" value="EM"/>
    <property type="resolution" value="7.20 A"/>
    <property type="chains" value="D=1-142"/>
</dbReference>
<dbReference type="PDB" id="5IY7">
    <property type="method" value="EM"/>
    <property type="resolution" value="8.60 A"/>
    <property type="chains" value="D=1-142"/>
</dbReference>
<dbReference type="PDB" id="5IY8">
    <property type="method" value="EM"/>
    <property type="resolution" value="7.90 A"/>
    <property type="chains" value="D=1-142"/>
</dbReference>
<dbReference type="PDB" id="5IY9">
    <property type="method" value="EM"/>
    <property type="resolution" value="6.30 A"/>
    <property type="chains" value="D=1-142"/>
</dbReference>
<dbReference type="PDB" id="5IYA">
    <property type="method" value="EM"/>
    <property type="resolution" value="5.40 A"/>
    <property type="chains" value="D=1-142"/>
</dbReference>
<dbReference type="PDB" id="5IYB">
    <property type="method" value="EM"/>
    <property type="resolution" value="3.90 A"/>
    <property type="chains" value="D=1-142"/>
</dbReference>
<dbReference type="PDB" id="5IYC">
    <property type="method" value="EM"/>
    <property type="resolution" value="3.90 A"/>
    <property type="chains" value="D=1-142"/>
</dbReference>
<dbReference type="PDB" id="5IYD">
    <property type="method" value="EM"/>
    <property type="resolution" value="3.90 A"/>
    <property type="chains" value="D=1-142"/>
</dbReference>
<dbReference type="PDB" id="6DRD">
    <property type="method" value="EM"/>
    <property type="resolution" value="3.90 A"/>
    <property type="chains" value="D=1-142"/>
</dbReference>
<dbReference type="PDB" id="6O9L">
    <property type="method" value="EM"/>
    <property type="resolution" value="7.20 A"/>
    <property type="chains" value="D=1-142"/>
</dbReference>
<dbReference type="PDB" id="6XRE">
    <property type="method" value="EM"/>
    <property type="resolution" value="4.60 A"/>
    <property type="chains" value="D=1-142"/>
</dbReference>
<dbReference type="PDB" id="7LBM">
    <property type="method" value="EM"/>
    <property type="resolution" value="4.80 A"/>
    <property type="chains" value="D=1-142"/>
</dbReference>
<dbReference type="PDB" id="9EHZ">
    <property type="method" value="EM"/>
    <property type="resolution" value="2.60 A"/>
    <property type="chains" value="D=1-142"/>
</dbReference>
<dbReference type="PDB" id="9EI1">
    <property type="method" value="EM"/>
    <property type="resolution" value="3.20 A"/>
    <property type="chains" value="D=1-142"/>
</dbReference>
<dbReference type="PDB" id="9EI3">
    <property type="method" value="EM"/>
    <property type="resolution" value="3.20 A"/>
    <property type="chains" value="D=1-142"/>
</dbReference>
<dbReference type="PDB" id="9EI4">
    <property type="method" value="EM"/>
    <property type="resolution" value="3.70 A"/>
    <property type="chains" value="D=1-142"/>
</dbReference>
<dbReference type="PDBsum" id="2C35"/>
<dbReference type="PDBsum" id="5IY6"/>
<dbReference type="PDBsum" id="5IY7"/>
<dbReference type="PDBsum" id="5IY8"/>
<dbReference type="PDBsum" id="5IY9"/>
<dbReference type="PDBsum" id="5IYA"/>
<dbReference type="PDBsum" id="5IYB"/>
<dbReference type="PDBsum" id="5IYC"/>
<dbReference type="PDBsum" id="5IYD"/>
<dbReference type="PDBsum" id="6DRD"/>
<dbReference type="PDBsum" id="6O9L"/>
<dbReference type="PDBsum" id="6XRE"/>
<dbReference type="PDBsum" id="7LBM"/>
<dbReference type="PDBsum" id="9EHZ"/>
<dbReference type="PDBsum" id="9EI1"/>
<dbReference type="PDBsum" id="9EI3"/>
<dbReference type="PDBsum" id="9EI4"/>
<dbReference type="EMDB" id="EMD-22294"/>
<dbReference type="EMDB" id="EMD-23255"/>
<dbReference type="EMDB" id="EMD-48071"/>
<dbReference type="EMDB" id="EMD-48073"/>
<dbReference type="EMDB" id="EMD-48075"/>
<dbReference type="EMDB" id="EMD-48076"/>
<dbReference type="EMDB" id="EMD-7997"/>
<dbReference type="EMDB" id="EMD-8132"/>
<dbReference type="EMDB" id="EMD-8133"/>
<dbReference type="EMDB" id="EMD-8134"/>
<dbReference type="EMDB" id="EMD-8135"/>
<dbReference type="EMDB" id="EMD-8136"/>
<dbReference type="EMDB" id="EMD-8137"/>
<dbReference type="EMDB" id="EMD-8138"/>
<dbReference type="SMR" id="O15514"/>
<dbReference type="BioGRID" id="111429">
    <property type="interactions" value="156"/>
</dbReference>
<dbReference type="ComplexPortal" id="CPX-2387">
    <property type="entry name" value="DNA-directed RNA polymerase II complex, Pol II(G) variant"/>
</dbReference>
<dbReference type="ComplexPortal" id="CPX-7481">
    <property type="entry name" value="DNA-directed RNA polymerase II complex"/>
</dbReference>
<dbReference type="CORUM" id="O15514"/>
<dbReference type="DIP" id="DIP-32912N"/>
<dbReference type="FunCoup" id="O15514">
    <property type="interactions" value="4314"/>
</dbReference>
<dbReference type="IntAct" id="O15514">
    <property type="interactions" value="92"/>
</dbReference>
<dbReference type="MINT" id="O15514"/>
<dbReference type="STRING" id="9606.ENSP00000272645"/>
<dbReference type="GlyGen" id="O15514">
    <property type="glycosylation" value="1 site, 3 N-linked glycans (1 site)"/>
</dbReference>
<dbReference type="iPTMnet" id="O15514"/>
<dbReference type="PhosphoSitePlus" id="O15514"/>
<dbReference type="BioMuta" id="POLR2D"/>
<dbReference type="jPOST" id="O15514"/>
<dbReference type="MassIVE" id="O15514"/>
<dbReference type="PaxDb" id="9606-ENSP00000272645"/>
<dbReference type="PeptideAtlas" id="O15514"/>
<dbReference type="ProteomicsDB" id="48705"/>
<dbReference type="Pumba" id="O15514"/>
<dbReference type="Antibodypedia" id="33469">
    <property type="antibodies" value="191 antibodies from 29 providers"/>
</dbReference>
<dbReference type="DNASU" id="5433"/>
<dbReference type="Ensembl" id="ENST00000272645.9">
    <property type="protein sequence ID" value="ENSP00000272645.3"/>
    <property type="gene ID" value="ENSG00000144231.11"/>
</dbReference>
<dbReference type="GeneID" id="5433"/>
<dbReference type="KEGG" id="hsa:5433"/>
<dbReference type="MANE-Select" id="ENST00000272645.9">
    <property type="protein sequence ID" value="ENSP00000272645.3"/>
    <property type="RefSeq nucleotide sequence ID" value="NM_004805.4"/>
    <property type="RefSeq protein sequence ID" value="NP_004796.1"/>
</dbReference>
<dbReference type="UCSC" id="uc002tpj.4">
    <property type="organism name" value="human"/>
</dbReference>
<dbReference type="AGR" id="HGNC:9191"/>
<dbReference type="CTD" id="5433"/>
<dbReference type="DisGeNET" id="5433"/>
<dbReference type="GeneCards" id="POLR2D"/>
<dbReference type="HGNC" id="HGNC:9191">
    <property type="gene designation" value="POLR2D"/>
</dbReference>
<dbReference type="HPA" id="ENSG00000144231">
    <property type="expression patterns" value="Tissue enhanced (testis)"/>
</dbReference>
<dbReference type="MIM" id="606017">
    <property type="type" value="gene"/>
</dbReference>
<dbReference type="neXtProt" id="NX_O15514"/>
<dbReference type="OpenTargets" id="ENSG00000144231"/>
<dbReference type="PharmGKB" id="PA33511"/>
<dbReference type="VEuPathDB" id="HostDB:ENSG00000144231"/>
<dbReference type="eggNOG" id="KOG2351">
    <property type="taxonomic scope" value="Eukaryota"/>
</dbReference>
<dbReference type="GeneTree" id="ENSGT00390000004912"/>
<dbReference type="InParanoid" id="O15514"/>
<dbReference type="OMA" id="HRKTQNE"/>
<dbReference type="OrthoDB" id="2186918at2759"/>
<dbReference type="PAN-GO" id="O15514">
    <property type="GO annotations" value="8 GO annotations based on evolutionary models"/>
</dbReference>
<dbReference type="PhylomeDB" id="O15514"/>
<dbReference type="TreeFam" id="TF103039"/>
<dbReference type="PathwayCommons" id="O15514"/>
<dbReference type="Reactome" id="R-HSA-112382">
    <property type="pathway name" value="Formation of RNA Pol II elongation complex"/>
</dbReference>
<dbReference type="Reactome" id="R-HSA-113418">
    <property type="pathway name" value="Formation of the Early Elongation Complex"/>
</dbReference>
<dbReference type="Reactome" id="R-HSA-167152">
    <property type="pathway name" value="Formation of HIV elongation complex in the absence of HIV Tat"/>
</dbReference>
<dbReference type="Reactome" id="R-HSA-167158">
    <property type="pathway name" value="Formation of the HIV-1 Early Elongation Complex"/>
</dbReference>
<dbReference type="Reactome" id="R-HSA-167160">
    <property type="pathway name" value="RNA Pol II CTD phosphorylation and interaction with CE during HIV infection"/>
</dbReference>
<dbReference type="Reactome" id="R-HSA-167161">
    <property type="pathway name" value="HIV Transcription Initiation"/>
</dbReference>
<dbReference type="Reactome" id="R-HSA-167162">
    <property type="pathway name" value="RNA Polymerase II HIV Promoter Escape"/>
</dbReference>
<dbReference type="Reactome" id="R-HSA-167172">
    <property type="pathway name" value="Transcription of the HIV genome"/>
</dbReference>
<dbReference type="Reactome" id="R-HSA-167200">
    <property type="pathway name" value="Formation of HIV-1 elongation complex containing HIV-1 Tat"/>
</dbReference>
<dbReference type="Reactome" id="R-HSA-167238">
    <property type="pathway name" value="Pausing and recovery of Tat-mediated HIV elongation"/>
</dbReference>
<dbReference type="Reactome" id="R-HSA-167242">
    <property type="pathway name" value="Abortive elongation of HIV-1 transcript in the absence of Tat"/>
</dbReference>
<dbReference type="Reactome" id="R-HSA-167243">
    <property type="pathway name" value="Tat-mediated HIV elongation arrest and recovery"/>
</dbReference>
<dbReference type="Reactome" id="R-HSA-167246">
    <property type="pathway name" value="Tat-mediated elongation of the HIV-1 transcript"/>
</dbReference>
<dbReference type="Reactome" id="R-HSA-167287">
    <property type="pathway name" value="HIV elongation arrest and recovery"/>
</dbReference>
<dbReference type="Reactome" id="R-HSA-167290">
    <property type="pathway name" value="Pausing and recovery of HIV elongation"/>
</dbReference>
<dbReference type="Reactome" id="R-HSA-168325">
    <property type="pathway name" value="Viral Messenger RNA Synthesis"/>
</dbReference>
<dbReference type="Reactome" id="R-HSA-203927">
    <property type="pathway name" value="MicroRNA (miRNA) biogenesis"/>
</dbReference>
<dbReference type="Reactome" id="R-HSA-5578749">
    <property type="pathway name" value="Transcriptional regulation by small RNAs"/>
</dbReference>
<dbReference type="Reactome" id="R-HSA-5601884">
    <property type="pathway name" value="PIWI-interacting RNA (piRNA) biogenesis"/>
</dbReference>
<dbReference type="Reactome" id="R-HSA-5617472">
    <property type="pathway name" value="Activation of anterior HOX genes in hindbrain development during early embryogenesis"/>
</dbReference>
<dbReference type="Reactome" id="R-HSA-674695">
    <property type="pathway name" value="RNA Polymerase II Pre-transcription Events"/>
</dbReference>
<dbReference type="Reactome" id="R-HSA-6781823">
    <property type="pathway name" value="Formation of TC-NER Pre-Incision Complex"/>
</dbReference>
<dbReference type="Reactome" id="R-HSA-6781827">
    <property type="pathway name" value="Transcription-Coupled Nucleotide Excision Repair (TC-NER)"/>
</dbReference>
<dbReference type="Reactome" id="R-HSA-6782135">
    <property type="pathway name" value="Dual incision in TC-NER"/>
</dbReference>
<dbReference type="Reactome" id="R-HSA-6782210">
    <property type="pathway name" value="Gap-filling DNA repair synthesis and ligation in TC-NER"/>
</dbReference>
<dbReference type="Reactome" id="R-HSA-6796648">
    <property type="pathway name" value="TP53 Regulates Transcription of DNA Repair Genes"/>
</dbReference>
<dbReference type="Reactome" id="R-HSA-6803529">
    <property type="pathway name" value="FGFR2 alternative splicing"/>
</dbReference>
<dbReference type="Reactome" id="R-HSA-6807505">
    <property type="pathway name" value="RNA polymerase II transcribes snRNA genes"/>
</dbReference>
<dbReference type="Reactome" id="R-HSA-72086">
    <property type="pathway name" value="mRNA Capping"/>
</dbReference>
<dbReference type="Reactome" id="R-HSA-72163">
    <property type="pathway name" value="mRNA Splicing - Major Pathway"/>
</dbReference>
<dbReference type="Reactome" id="R-HSA-72165">
    <property type="pathway name" value="mRNA Splicing - Minor Pathway"/>
</dbReference>
<dbReference type="Reactome" id="R-HSA-72203">
    <property type="pathway name" value="Processing of Capped Intron-Containing Pre-mRNA"/>
</dbReference>
<dbReference type="Reactome" id="R-HSA-73776">
    <property type="pathway name" value="RNA Polymerase II Promoter Escape"/>
</dbReference>
<dbReference type="Reactome" id="R-HSA-73779">
    <property type="pathway name" value="RNA Polymerase II Transcription Pre-Initiation And Promoter Opening"/>
</dbReference>
<dbReference type="Reactome" id="R-HSA-75953">
    <property type="pathway name" value="RNA Polymerase II Transcription Initiation"/>
</dbReference>
<dbReference type="Reactome" id="R-HSA-75955">
    <property type="pathway name" value="RNA Polymerase II Transcription Elongation"/>
</dbReference>
<dbReference type="Reactome" id="R-HSA-76042">
    <property type="pathway name" value="RNA Polymerase II Transcription Initiation And Promoter Clearance"/>
</dbReference>
<dbReference type="Reactome" id="R-HSA-77075">
    <property type="pathway name" value="RNA Pol II CTD phosphorylation and interaction with CE"/>
</dbReference>
<dbReference type="Reactome" id="R-HSA-8851708">
    <property type="pathway name" value="Signaling by FGFR2 IIIa TM"/>
</dbReference>
<dbReference type="Reactome" id="R-HSA-9018519">
    <property type="pathway name" value="Estrogen-dependent gene expression"/>
</dbReference>
<dbReference type="Reactome" id="R-HSA-9670095">
    <property type="pathway name" value="Inhibition of DNA recombination at telomere"/>
</dbReference>
<dbReference type="SignaLink" id="O15514"/>
<dbReference type="SIGNOR" id="O15514"/>
<dbReference type="BioGRID-ORCS" id="5433">
    <property type="hits" value="844 hits in 1180 CRISPR screens"/>
</dbReference>
<dbReference type="ChiTaRS" id="POLR2D">
    <property type="organism name" value="human"/>
</dbReference>
<dbReference type="EvolutionaryTrace" id="O15514"/>
<dbReference type="GeneWiki" id="RNA_polymerase_II_subunit_B4"/>
<dbReference type="GenomeRNAi" id="5433"/>
<dbReference type="Pharos" id="O15514">
    <property type="development level" value="Tbio"/>
</dbReference>
<dbReference type="PRO" id="PR:O15514"/>
<dbReference type="Proteomes" id="UP000005640">
    <property type="component" value="Chromosome 2"/>
</dbReference>
<dbReference type="RNAct" id="O15514">
    <property type="molecule type" value="protein"/>
</dbReference>
<dbReference type="Bgee" id="ENSG00000144231">
    <property type="expression patterns" value="Expressed in endothelial cell and 185 other cell types or tissues"/>
</dbReference>
<dbReference type="ExpressionAtlas" id="O15514">
    <property type="expression patterns" value="baseline and differential"/>
</dbReference>
<dbReference type="GO" id="GO:0005829">
    <property type="term" value="C:cytosol"/>
    <property type="evidence" value="ECO:0000314"/>
    <property type="project" value="HPA"/>
</dbReference>
<dbReference type="GO" id="GO:0016607">
    <property type="term" value="C:nuclear speck"/>
    <property type="evidence" value="ECO:0000314"/>
    <property type="project" value="HPA"/>
</dbReference>
<dbReference type="GO" id="GO:0005654">
    <property type="term" value="C:nucleoplasm"/>
    <property type="evidence" value="ECO:0000314"/>
    <property type="project" value="HPA"/>
</dbReference>
<dbReference type="GO" id="GO:0005634">
    <property type="term" value="C:nucleus"/>
    <property type="evidence" value="ECO:0000314"/>
    <property type="project" value="UniProtKB"/>
</dbReference>
<dbReference type="GO" id="GO:0005665">
    <property type="term" value="C:RNA polymerase II, core complex"/>
    <property type="evidence" value="ECO:0000314"/>
    <property type="project" value="UniProtKB"/>
</dbReference>
<dbReference type="GO" id="GO:0000166">
    <property type="term" value="F:nucleotide binding"/>
    <property type="evidence" value="ECO:0007669"/>
    <property type="project" value="InterPro"/>
</dbReference>
<dbReference type="GO" id="GO:0031369">
    <property type="term" value="F:translation initiation factor binding"/>
    <property type="evidence" value="ECO:0000318"/>
    <property type="project" value="GO_Central"/>
</dbReference>
<dbReference type="GO" id="GO:0006366">
    <property type="term" value="P:transcription by RNA polymerase II"/>
    <property type="evidence" value="ECO:0000314"/>
    <property type="project" value="UniProtKB"/>
</dbReference>
<dbReference type="GO" id="GO:0006367">
    <property type="term" value="P:transcription initiation at RNA polymerase II promoter"/>
    <property type="evidence" value="ECO:0000318"/>
    <property type="project" value="GO_Central"/>
</dbReference>
<dbReference type="FunFam" id="1.20.1250.40:FF:000001">
    <property type="entry name" value="DNA-directed RNA polymerase II subunit RPB4"/>
    <property type="match status" value="1"/>
</dbReference>
<dbReference type="Gene3D" id="1.20.1250.40">
    <property type="match status" value="1"/>
</dbReference>
<dbReference type="InterPro" id="IPR010997">
    <property type="entry name" value="HRDC-like_sf"/>
</dbReference>
<dbReference type="InterPro" id="IPR006590">
    <property type="entry name" value="RNA_pol_Rpb4/RPC9_core"/>
</dbReference>
<dbReference type="InterPro" id="IPR045222">
    <property type="entry name" value="Rpb4-like"/>
</dbReference>
<dbReference type="InterPro" id="IPR005574">
    <property type="entry name" value="Rpb4/RPC9"/>
</dbReference>
<dbReference type="InterPro" id="IPR038324">
    <property type="entry name" value="Rpb4/RPC9_sf"/>
</dbReference>
<dbReference type="PANTHER" id="PTHR21297">
    <property type="entry name" value="DNA-DIRECTED RNA POLYMERASE II"/>
    <property type="match status" value="1"/>
</dbReference>
<dbReference type="Pfam" id="PF03874">
    <property type="entry name" value="RNA_pol_Rpb4"/>
    <property type="match status" value="1"/>
</dbReference>
<dbReference type="SMART" id="SM00657">
    <property type="entry name" value="RPOL4c"/>
    <property type="match status" value="1"/>
</dbReference>
<dbReference type="SUPFAM" id="SSF47819">
    <property type="entry name" value="HRDC-like"/>
    <property type="match status" value="1"/>
</dbReference>
<reference key="1">
    <citation type="journal article" date="1998" name="Mol. Cell. Biol.">
        <title>Analysis of the interaction of the novel RNA polymerase II (pol II) subunit hsRPB4 with its partner hsRPB7 and with pol II.</title>
        <authorList>
            <person name="Khazak V."/>
            <person name="Estojak J."/>
            <person name="Cho H."/>
            <person name="Majors J.A."/>
            <person name="Sonoda G."/>
            <person name="Testa J.R."/>
            <person name="Golemis E.A."/>
        </authorList>
    </citation>
    <scope>NUCLEOTIDE SEQUENCE [GENOMIC DNA / MRNA]</scope>
    <source>
        <tissue>Cervix carcinoma</tissue>
    </source>
</reference>
<reference key="2">
    <citation type="journal article" date="2004" name="Genome Res.">
        <title>The status, quality, and expansion of the NIH full-length cDNA project: the Mammalian Gene Collection (MGC).</title>
        <authorList>
            <consortium name="The MGC Project Team"/>
        </authorList>
    </citation>
    <scope>NUCLEOTIDE SEQUENCE [LARGE SCALE MRNA]</scope>
    <source>
        <tissue>Lung</tissue>
        <tissue>Skin</tissue>
    </source>
</reference>
<reference key="3">
    <citation type="journal article" date="1998" name="J. Biol. Chem.">
        <title>Immunoaffinity purification and functional characterization of human transcription factor IIH and RNA polymerase II from clonal cell lines that conditionally express epitope-tagged subunits of the multiprotein complexes.</title>
        <authorList>
            <person name="Kershnar E."/>
            <person name="Wu S.-Y."/>
            <person name="Chiang C.-M."/>
        </authorList>
    </citation>
    <scope>FUNCTION</scope>
    <scope>IDENTIFICATION IN THE RNA POLYMERASE II CORE-COMPLEX</scope>
    <scope>SUBCELLULAR LOCATION</scope>
</reference>
<reference key="4">
    <citation type="journal article" date="2011" name="BMC Syst. Biol.">
        <title>Initial characterization of the human central proteome.</title>
        <authorList>
            <person name="Burkard T.R."/>
            <person name="Planyavsky M."/>
            <person name="Kaupe I."/>
            <person name="Breitwieser F.P."/>
            <person name="Buerckstuemmer T."/>
            <person name="Bennett K.L."/>
            <person name="Superti-Furga G."/>
            <person name="Colinge J."/>
        </authorList>
    </citation>
    <scope>IDENTIFICATION BY MASS SPECTROMETRY [LARGE SCALE ANALYSIS]</scope>
</reference>
<reference key="5">
    <citation type="journal article" date="2005" name="Nucleic Acids Res.">
        <title>Crystal structure and RNA binding of the Rpb4/Rpb7 subunits of human RNA polymerase II.</title>
        <authorList>
            <person name="Meka H."/>
            <person name="Werner F."/>
            <person name="Cordell S.C."/>
            <person name="Onesti S."/>
            <person name="Brick P."/>
        </authorList>
    </citation>
    <scope>X-RAY CRYSTALLOGRAPHY (2.7 ANGSTROMS) OF THE POL II RPB4-RPB7 SUBCOMPLEX</scope>
</reference>
<reference key="6">
    <citation type="journal article" date="2016" name="Nature">
        <title>Near-atomic resolution visualization of human transcription promoter opening.</title>
        <authorList>
            <person name="He Y."/>
            <person name="Yan C."/>
            <person name="Fang J."/>
            <person name="Inouye C."/>
            <person name="Tjian R."/>
            <person name="Ivanov I."/>
            <person name="Nogales E."/>
        </authorList>
    </citation>
    <scope>STRUCTURE BY ELECTRON MICROSCOPY (3.90 ANGSTROMS)</scope>
    <scope>FUNCTION OF POL II</scope>
    <scope>SUBUNIT</scope>
</reference>
<reference key="7">
    <citation type="journal article" date="2018" name="Nat. Struct. Mol. Biol.">
        <title>Architecture of Pol II(G) and molecular mechanism of transcription regulation by Gdown1.</title>
        <authorList>
            <person name="Jishage M."/>
            <person name="Yu X."/>
            <person name="Shi Y."/>
            <person name="Ganesan S.J."/>
            <person name="Chen W.Y."/>
            <person name="Sali A."/>
            <person name="Chait B.T."/>
            <person name="Asturias F.J."/>
            <person name="Roeder R.G."/>
        </authorList>
    </citation>
    <scope>STRUCTURE BY ELECTRON MICROSCOPY (3.90 ANGSTROMS)</scope>
    <scope>FUNCTION OF POL II</scope>
    <scope>SUBUNIT</scope>
</reference>
<evidence type="ECO:0000250" key="1">
    <source>
        <dbReference type="UniProtKB" id="P20433"/>
    </source>
</evidence>
<evidence type="ECO:0000269" key="2">
    <source>
    </source>
</evidence>
<evidence type="ECO:0000269" key="3">
    <source>
    </source>
</evidence>
<evidence type="ECO:0000269" key="4">
    <source>
    </source>
</evidence>
<evidence type="ECO:0000269" key="5">
    <source>
    </source>
</evidence>
<evidence type="ECO:0000305" key="6"/>
<evidence type="ECO:0007829" key="7">
    <source>
        <dbReference type="PDB" id="2C35"/>
    </source>
</evidence>
<protein>
    <recommendedName>
        <fullName>DNA-directed RNA polymerase II subunit RPB4</fullName>
        <shortName>RNA polymerase II subunit B4</shortName>
    </recommendedName>
    <alternativeName>
        <fullName>DNA-directed RNA polymerase II subunit D</fullName>
    </alternativeName>
    <alternativeName>
        <fullName>RNA polymerase II 16 kDa subunit</fullName>
        <shortName>RPB16</shortName>
    </alternativeName>
</protein>
<organism>
    <name type="scientific">Homo sapiens</name>
    <name type="common">Human</name>
    <dbReference type="NCBI Taxonomy" id="9606"/>
    <lineage>
        <taxon>Eukaryota</taxon>
        <taxon>Metazoa</taxon>
        <taxon>Chordata</taxon>
        <taxon>Craniata</taxon>
        <taxon>Vertebrata</taxon>
        <taxon>Euteleostomi</taxon>
        <taxon>Mammalia</taxon>
        <taxon>Eutheria</taxon>
        <taxon>Euarchontoglires</taxon>
        <taxon>Primates</taxon>
        <taxon>Haplorrhini</taxon>
        <taxon>Catarrhini</taxon>
        <taxon>Hominidae</taxon>
        <taxon>Homo</taxon>
    </lineage>
</organism>
<keyword id="KW-0002">3D-structure</keyword>
<keyword id="KW-0240">DNA-directed RNA polymerase</keyword>
<keyword id="KW-0539">Nucleus</keyword>
<keyword id="KW-1267">Proteomics identification</keyword>
<keyword id="KW-1185">Reference proteome</keyword>
<keyword id="KW-0804">Transcription</keyword>
<feature type="chain" id="PRO_0000073981" description="DNA-directed RNA polymerase II subunit RPB4">
    <location>
        <begin position="1"/>
        <end position="142"/>
    </location>
</feature>
<feature type="helix" evidence="7">
    <location>
        <begin position="17"/>
        <end position="19"/>
    </location>
</feature>
<feature type="strand" evidence="7">
    <location>
        <begin position="24"/>
        <end position="28"/>
    </location>
</feature>
<feature type="helix" evidence="7">
    <location>
        <begin position="34"/>
        <end position="49"/>
    </location>
</feature>
<feature type="helix" evidence="7">
    <location>
        <begin position="59"/>
        <end position="70"/>
    </location>
</feature>
<feature type="helix" evidence="7">
    <location>
        <begin position="77"/>
        <end position="88"/>
    </location>
</feature>
<feature type="helix" evidence="7">
    <location>
        <begin position="94"/>
        <end position="103"/>
    </location>
</feature>
<feature type="helix" evidence="7">
    <location>
        <begin position="108"/>
        <end position="114"/>
    </location>
</feature>
<feature type="helix" evidence="7">
    <location>
        <begin position="116"/>
        <end position="118"/>
    </location>
</feature>
<feature type="turn" evidence="7">
    <location>
        <begin position="119"/>
        <end position="121"/>
    </location>
</feature>
<feature type="helix" evidence="7">
    <location>
        <begin position="124"/>
        <end position="137"/>
    </location>
</feature>
<accession>O15514</accession>
<accession>Q52LT4</accession>
<comment type="function">
    <text evidence="1 3 4 5">Core component of RNA polymerase II (Pol II), a DNA-dependent RNA polymerase which synthesizes mRNA precursors and many functional non-coding RNAs using the four ribonucleoside triphosphates as substrates. Pol II is the central component of the basal RNA polymerase II transcription machinery. It is composed of mobile elements that move relative to each other. POLR2D/RPB4 is part of a subcomplex with POLR2G/RPB7 that binds to a pocket formed by POLR2A/RPB1, POLR2B/RPB2 and POLR2F/RPABC2 at the base of the clamp element. The POLR2D/RPB4-POLR2G/RPB7 subcomplex seems to lock the clamp via POLR2G/RPB7 in the closed conformation thus preventing double-stranded DNA to enter the active site cleft. The POLR2D/RPB4-POLR2G/RPB7 subcomplex binds single-stranded DNA and RNA.</text>
</comment>
<comment type="subunit">
    <text evidence="2 3 4 5">Component of the RNA polymerase II (Pol II) core complex consisting of 12 subunits: a ten-subunit catalytic core composed of POLR2A/RPB1, POLR2B/RPB2, POLR2C/RPB3, POLR2I/RPB9, POLR2J/RPB11, POLR2E/RPABC1, POLR2F/RPABC2, POLR2H/RPABC3, POLR2K/RPABC4 and POLR2L/RPABC5 and a mobile stalk composed of two subunits POLR2D/RPB4 and POLR2G/RPB7, protruding from the core and functioning primarily in transcription initiation. Part of Pol II(G) complex, in which Pol II core associates with an additional subunit POLR2M; unlike conventional Pol II, Pol II(G) functions as a transcriptional repressor. Part of TBP-based Pol II pre-initiation complex (PIC), in which Pol II core assembles with general transcription factors and other specific initiation factors including GTF2E1, GTF2E2, GTF2F1, GTF2F2, TCEA1, ERCC2, ERCC3, GTF2H2, GTF2H3, GTF2H4, GTF2H5, GTF2A1, GTF2A2, GTF2B and TBP; this large multi-subunit PIC complex mediates DNA unwinding and targets Pol II core to the transcription start site where the first phosphodiester bond forms.</text>
</comment>
<comment type="interaction">
    <interactant intactId="EBI-394737">
        <id>O15514</id>
    </interactant>
    <interactant intactId="EBI-359527">
        <id>P62875</id>
        <label>POLR2L</label>
    </interactant>
    <organismsDiffer>false</organismsDiffer>
    <experiments>5</experiments>
</comment>
<comment type="subcellular location">
    <subcellularLocation>
        <location evidence="5">Nucleus</location>
    </subcellularLocation>
</comment>
<comment type="similarity">
    <text evidence="6">Belongs to the eukaryotic RPB4 RNA polymerase subunit family.</text>
</comment>
<proteinExistence type="evidence at protein level"/>
<sequence length="142" mass="16311">MAAGGSDPRAGDVEEDASQLIFPKEFETAETLLNSEVHMLLEHRKQQNESAEDEQELSEVFMKTLNYTARFSRFKNRETIASVRSLLLQKKLHKFELACLANLCPETAEESKALIPSLEGRFEDEELQQILDDIQTKRSFQY</sequence>
<gene>
    <name type="primary">POLR2D</name>
</gene>